<gene>
    <name type="primary">yddN</name>
    <name type="ordered locus">BSU05040</name>
</gene>
<accession>P96651</accession>
<comment type="similarity">
    <text evidence="1">To bacterial alkanal monooxygenase alpha and beta chains.</text>
</comment>
<evidence type="ECO:0000305" key="1"/>
<keyword id="KW-1185">Reference proteome</keyword>
<name>YDDN_BACSU</name>
<dbReference type="EMBL" id="AB001488">
    <property type="protein sequence ID" value="BAA19340.1"/>
    <property type="molecule type" value="Genomic_DNA"/>
</dbReference>
<dbReference type="EMBL" id="AL009126">
    <property type="protein sequence ID" value="CAB12311.1"/>
    <property type="molecule type" value="Genomic_DNA"/>
</dbReference>
<dbReference type="PIR" id="F69776">
    <property type="entry name" value="F69776"/>
</dbReference>
<dbReference type="RefSeq" id="NP_388385.1">
    <property type="nucleotide sequence ID" value="NC_000964.3"/>
</dbReference>
<dbReference type="RefSeq" id="WP_003234259.1">
    <property type="nucleotide sequence ID" value="NZ_OZ025638.1"/>
</dbReference>
<dbReference type="SMR" id="P96651"/>
<dbReference type="FunCoup" id="P96651">
    <property type="interactions" value="70"/>
</dbReference>
<dbReference type="STRING" id="224308.BSU05040"/>
<dbReference type="PaxDb" id="224308-BSU05040"/>
<dbReference type="DNASU" id="938133"/>
<dbReference type="EnsemblBacteria" id="CAB12311">
    <property type="protein sequence ID" value="CAB12311"/>
    <property type="gene ID" value="BSU_05040"/>
</dbReference>
<dbReference type="GeneID" id="938133"/>
<dbReference type="KEGG" id="bsu:BSU05040"/>
<dbReference type="PATRIC" id="fig|224308.179.peg.534"/>
<dbReference type="eggNOG" id="COG2141">
    <property type="taxonomic scope" value="Bacteria"/>
</dbReference>
<dbReference type="InParanoid" id="P96651"/>
<dbReference type="OrthoDB" id="9780518at2"/>
<dbReference type="PhylomeDB" id="P96651"/>
<dbReference type="BioCyc" id="BSUB:BSU05040-MONOMER"/>
<dbReference type="Proteomes" id="UP000001570">
    <property type="component" value="Chromosome"/>
</dbReference>
<dbReference type="GO" id="GO:0005829">
    <property type="term" value="C:cytosol"/>
    <property type="evidence" value="ECO:0000318"/>
    <property type="project" value="GO_Central"/>
</dbReference>
<dbReference type="GO" id="GO:0016705">
    <property type="term" value="F:oxidoreductase activity, acting on paired donors, with incorporation or reduction of molecular oxygen"/>
    <property type="evidence" value="ECO:0007669"/>
    <property type="project" value="InterPro"/>
</dbReference>
<dbReference type="FunFam" id="3.20.20.30:FF:000002">
    <property type="entry name" value="LLM class flavin-dependent oxidoreductase"/>
    <property type="match status" value="1"/>
</dbReference>
<dbReference type="Gene3D" id="3.20.20.30">
    <property type="entry name" value="Luciferase-like domain"/>
    <property type="match status" value="1"/>
</dbReference>
<dbReference type="InterPro" id="IPR050766">
    <property type="entry name" value="Bact_Lucif_Oxidored"/>
</dbReference>
<dbReference type="InterPro" id="IPR019949">
    <property type="entry name" value="CmoO-like"/>
</dbReference>
<dbReference type="InterPro" id="IPR011251">
    <property type="entry name" value="Luciferase-like_dom"/>
</dbReference>
<dbReference type="InterPro" id="IPR036661">
    <property type="entry name" value="Luciferase-like_sf"/>
</dbReference>
<dbReference type="NCBIfam" id="TIGR03558">
    <property type="entry name" value="oxido_grp_1"/>
    <property type="match status" value="1"/>
</dbReference>
<dbReference type="PANTHER" id="PTHR30137">
    <property type="entry name" value="LUCIFERASE-LIKE MONOOXYGENASE"/>
    <property type="match status" value="1"/>
</dbReference>
<dbReference type="PANTHER" id="PTHR30137:SF6">
    <property type="entry name" value="LUCIFERASE-LIKE MONOOXYGENASE"/>
    <property type="match status" value="1"/>
</dbReference>
<dbReference type="Pfam" id="PF00296">
    <property type="entry name" value="Bac_luciferase"/>
    <property type="match status" value="1"/>
</dbReference>
<dbReference type="SUPFAM" id="SSF51679">
    <property type="entry name" value="Bacterial luciferase-like"/>
    <property type="match status" value="1"/>
</dbReference>
<feature type="chain" id="PRO_0000049501" description="Uncharacterized protein YddN">
    <location>
        <begin position="1"/>
        <end position="339"/>
    </location>
</feature>
<sequence>MKKFDISVLSVAPLRQGETMKQGIDSAVSLAKAVDNMGYKRIWFAEHHNHDAYASAATVSIVQHILANTKDIRVGSGGIMLPNHSPLIVAEQFGTLETLYPNRVDLALGRAPGTDQKTADVIRRSNHNGVFFFEREVNDILRFVGDKSVQGEVRAYPGIGTHVPVFVLGSSTDSAEIAAKLGLPYAFGAQFSPHSMEEALSIYRENFQPSSYLQEPYVIACINVIAAESIDEASFISASHLQVYIDIYTNNLSKLIPPTENFLESLSQFELEILHSRLGYTIMGDRETIRRELIDFQQMYHADELIVLSNIYELSKEIQSYEILKQVVDELFKKRMEQL</sequence>
<protein>
    <recommendedName>
        <fullName>Uncharacterized protein YddN</fullName>
    </recommendedName>
</protein>
<reference key="1">
    <citation type="submission" date="1997-03" db="EMBL/GenBank/DDBJ databases">
        <title>A 148 kbp sequence of the region between 35 and 47 degree of the Bacillus subtilis genome.</title>
        <authorList>
            <person name="Kasahara Y."/>
            <person name="Nakai S."/>
            <person name="Lee S."/>
            <person name="Sadaie Y."/>
            <person name="Ogasawara N."/>
        </authorList>
    </citation>
    <scope>NUCLEOTIDE SEQUENCE [GENOMIC DNA]</scope>
    <source>
        <strain>168</strain>
    </source>
</reference>
<reference key="2">
    <citation type="journal article" date="1997" name="Nature">
        <title>The complete genome sequence of the Gram-positive bacterium Bacillus subtilis.</title>
        <authorList>
            <person name="Kunst F."/>
            <person name="Ogasawara N."/>
            <person name="Moszer I."/>
            <person name="Albertini A.M."/>
            <person name="Alloni G."/>
            <person name="Azevedo V."/>
            <person name="Bertero M.G."/>
            <person name="Bessieres P."/>
            <person name="Bolotin A."/>
            <person name="Borchert S."/>
            <person name="Borriss R."/>
            <person name="Boursier L."/>
            <person name="Brans A."/>
            <person name="Braun M."/>
            <person name="Brignell S.C."/>
            <person name="Bron S."/>
            <person name="Brouillet S."/>
            <person name="Bruschi C.V."/>
            <person name="Caldwell B."/>
            <person name="Capuano V."/>
            <person name="Carter N.M."/>
            <person name="Choi S.-K."/>
            <person name="Codani J.-J."/>
            <person name="Connerton I.F."/>
            <person name="Cummings N.J."/>
            <person name="Daniel R.A."/>
            <person name="Denizot F."/>
            <person name="Devine K.M."/>
            <person name="Duesterhoeft A."/>
            <person name="Ehrlich S.D."/>
            <person name="Emmerson P.T."/>
            <person name="Entian K.-D."/>
            <person name="Errington J."/>
            <person name="Fabret C."/>
            <person name="Ferrari E."/>
            <person name="Foulger D."/>
            <person name="Fritz C."/>
            <person name="Fujita M."/>
            <person name="Fujita Y."/>
            <person name="Fuma S."/>
            <person name="Galizzi A."/>
            <person name="Galleron N."/>
            <person name="Ghim S.-Y."/>
            <person name="Glaser P."/>
            <person name="Goffeau A."/>
            <person name="Golightly E.J."/>
            <person name="Grandi G."/>
            <person name="Guiseppi G."/>
            <person name="Guy B.J."/>
            <person name="Haga K."/>
            <person name="Haiech J."/>
            <person name="Harwood C.R."/>
            <person name="Henaut A."/>
            <person name="Hilbert H."/>
            <person name="Holsappel S."/>
            <person name="Hosono S."/>
            <person name="Hullo M.-F."/>
            <person name="Itaya M."/>
            <person name="Jones L.-M."/>
            <person name="Joris B."/>
            <person name="Karamata D."/>
            <person name="Kasahara Y."/>
            <person name="Klaerr-Blanchard M."/>
            <person name="Klein C."/>
            <person name="Kobayashi Y."/>
            <person name="Koetter P."/>
            <person name="Koningstein G."/>
            <person name="Krogh S."/>
            <person name="Kumano M."/>
            <person name="Kurita K."/>
            <person name="Lapidus A."/>
            <person name="Lardinois S."/>
            <person name="Lauber J."/>
            <person name="Lazarevic V."/>
            <person name="Lee S.-M."/>
            <person name="Levine A."/>
            <person name="Liu H."/>
            <person name="Masuda S."/>
            <person name="Mauel C."/>
            <person name="Medigue C."/>
            <person name="Medina N."/>
            <person name="Mellado R.P."/>
            <person name="Mizuno M."/>
            <person name="Moestl D."/>
            <person name="Nakai S."/>
            <person name="Noback M."/>
            <person name="Noone D."/>
            <person name="O'Reilly M."/>
            <person name="Ogawa K."/>
            <person name="Ogiwara A."/>
            <person name="Oudega B."/>
            <person name="Park S.-H."/>
            <person name="Parro V."/>
            <person name="Pohl T.M."/>
            <person name="Portetelle D."/>
            <person name="Porwollik S."/>
            <person name="Prescott A.M."/>
            <person name="Presecan E."/>
            <person name="Pujic P."/>
            <person name="Purnelle B."/>
            <person name="Rapoport G."/>
            <person name="Rey M."/>
            <person name="Reynolds S."/>
            <person name="Rieger M."/>
            <person name="Rivolta C."/>
            <person name="Rocha E."/>
            <person name="Roche B."/>
            <person name="Rose M."/>
            <person name="Sadaie Y."/>
            <person name="Sato T."/>
            <person name="Scanlan E."/>
            <person name="Schleich S."/>
            <person name="Schroeter R."/>
            <person name="Scoffone F."/>
            <person name="Sekiguchi J."/>
            <person name="Sekowska A."/>
            <person name="Seror S.J."/>
            <person name="Serror P."/>
            <person name="Shin B.-S."/>
            <person name="Soldo B."/>
            <person name="Sorokin A."/>
            <person name="Tacconi E."/>
            <person name="Takagi T."/>
            <person name="Takahashi H."/>
            <person name="Takemaru K."/>
            <person name="Takeuchi M."/>
            <person name="Tamakoshi A."/>
            <person name="Tanaka T."/>
            <person name="Terpstra P."/>
            <person name="Tognoni A."/>
            <person name="Tosato V."/>
            <person name="Uchiyama S."/>
            <person name="Vandenbol M."/>
            <person name="Vannier F."/>
            <person name="Vassarotti A."/>
            <person name="Viari A."/>
            <person name="Wambutt R."/>
            <person name="Wedler E."/>
            <person name="Wedler H."/>
            <person name="Weitzenegger T."/>
            <person name="Winters P."/>
            <person name="Wipat A."/>
            <person name="Yamamoto H."/>
            <person name="Yamane K."/>
            <person name="Yasumoto K."/>
            <person name="Yata K."/>
            <person name="Yoshida K."/>
            <person name="Yoshikawa H.-F."/>
            <person name="Zumstein E."/>
            <person name="Yoshikawa H."/>
            <person name="Danchin A."/>
        </authorList>
    </citation>
    <scope>NUCLEOTIDE SEQUENCE [LARGE SCALE GENOMIC DNA]</scope>
    <source>
        <strain>168</strain>
    </source>
</reference>
<organism>
    <name type="scientific">Bacillus subtilis (strain 168)</name>
    <dbReference type="NCBI Taxonomy" id="224308"/>
    <lineage>
        <taxon>Bacteria</taxon>
        <taxon>Bacillati</taxon>
        <taxon>Bacillota</taxon>
        <taxon>Bacilli</taxon>
        <taxon>Bacillales</taxon>
        <taxon>Bacillaceae</taxon>
        <taxon>Bacillus</taxon>
    </lineage>
</organism>
<proteinExistence type="predicted"/>